<keyword id="KW-1185">Reference proteome</keyword>
<keyword id="KW-0687">Ribonucleoprotein</keyword>
<keyword id="KW-0689">Ribosomal protein</keyword>
<keyword id="KW-0694">RNA-binding</keyword>
<keyword id="KW-0699">rRNA-binding</keyword>
<organism>
    <name type="scientific">Salinispora tropica (strain ATCC BAA-916 / DSM 44818 / JCM 13857 / NBRC 105044 / CNB-440)</name>
    <dbReference type="NCBI Taxonomy" id="369723"/>
    <lineage>
        <taxon>Bacteria</taxon>
        <taxon>Bacillati</taxon>
        <taxon>Actinomycetota</taxon>
        <taxon>Actinomycetes</taxon>
        <taxon>Micromonosporales</taxon>
        <taxon>Micromonosporaceae</taxon>
        <taxon>Salinispora</taxon>
    </lineage>
</organism>
<feature type="chain" id="PRO_0000354517" description="Large ribosomal subunit protein uL22">
    <location>
        <begin position="1"/>
        <end position="152"/>
    </location>
</feature>
<feature type="region of interest" description="Disordered" evidence="2">
    <location>
        <begin position="124"/>
        <end position="152"/>
    </location>
</feature>
<feature type="compositionally biased region" description="Low complexity" evidence="2">
    <location>
        <begin position="124"/>
        <end position="145"/>
    </location>
</feature>
<dbReference type="EMBL" id="CP000667">
    <property type="protein sequence ID" value="ABP56348.1"/>
    <property type="molecule type" value="Genomic_DNA"/>
</dbReference>
<dbReference type="RefSeq" id="WP_012015120.1">
    <property type="nucleotide sequence ID" value="NC_009380.1"/>
</dbReference>
<dbReference type="SMR" id="A4XBP1"/>
<dbReference type="STRING" id="369723.Strop_3918"/>
<dbReference type="KEGG" id="stp:Strop_3918"/>
<dbReference type="PATRIC" id="fig|369723.5.peg.4044"/>
<dbReference type="eggNOG" id="COG0091">
    <property type="taxonomic scope" value="Bacteria"/>
</dbReference>
<dbReference type="HOGENOM" id="CLU_083987_3_2_11"/>
<dbReference type="Proteomes" id="UP000000235">
    <property type="component" value="Chromosome"/>
</dbReference>
<dbReference type="GO" id="GO:0022625">
    <property type="term" value="C:cytosolic large ribosomal subunit"/>
    <property type="evidence" value="ECO:0007669"/>
    <property type="project" value="TreeGrafter"/>
</dbReference>
<dbReference type="GO" id="GO:0019843">
    <property type="term" value="F:rRNA binding"/>
    <property type="evidence" value="ECO:0007669"/>
    <property type="project" value="UniProtKB-UniRule"/>
</dbReference>
<dbReference type="GO" id="GO:0003735">
    <property type="term" value="F:structural constituent of ribosome"/>
    <property type="evidence" value="ECO:0007669"/>
    <property type="project" value="InterPro"/>
</dbReference>
<dbReference type="GO" id="GO:0006412">
    <property type="term" value="P:translation"/>
    <property type="evidence" value="ECO:0007669"/>
    <property type="project" value="UniProtKB-UniRule"/>
</dbReference>
<dbReference type="CDD" id="cd00336">
    <property type="entry name" value="Ribosomal_L22"/>
    <property type="match status" value="1"/>
</dbReference>
<dbReference type="FunFam" id="3.90.470.10:FF:000002">
    <property type="entry name" value="50S ribosomal protein L22"/>
    <property type="match status" value="1"/>
</dbReference>
<dbReference type="Gene3D" id="3.90.470.10">
    <property type="entry name" value="Ribosomal protein L22/L17"/>
    <property type="match status" value="1"/>
</dbReference>
<dbReference type="HAMAP" id="MF_01331_B">
    <property type="entry name" value="Ribosomal_uL22_B"/>
    <property type="match status" value="1"/>
</dbReference>
<dbReference type="InterPro" id="IPR001063">
    <property type="entry name" value="Ribosomal_uL22"/>
</dbReference>
<dbReference type="InterPro" id="IPR005727">
    <property type="entry name" value="Ribosomal_uL22_bac/chlpt-type"/>
</dbReference>
<dbReference type="InterPro" id="IPR047867">
    <property type="entry name" value="Ribosomal_uL22_bac/org-type"/>
</dbReference>
<dbReference type="InterPro" id="IPR018260">
    <property type="entry name" value="Ribosomal_uL22_CS"/>
</dbReference>
<dbReference type="InterPro" id="IPR036394">
    <property type="entry name" value="Ribosomal_uL22_sf"/>
</dbReference>
<dbReference type="NCBIfam" id="TIGR01044">
    <property type="entry name" value="rplV_bact"/>
    <property type="match status" value="1"/>
</dbReference>
<dbReference type="PANTHER" id="PTHR13501">
    <property type="entry name" value="CHLOROPLAST 50S RIBOSOMAL PROTEIN L22-RELATED"/>
    <property type="match status" value="1"/>
</dbReference>
<dbReference type="PANTHER" id="PTHR13501:SF8">
    <property type="entry name" value="LARGE RIBOSOMAL SUBUNIT PROTEIN UL22M"/>
    <property type="match status" value="1"/>
</dbReference>
<dbReference type="Pfam" id="PF00237">
    <property type="entry name" value="Ribosomal_L22"/>
    <property type="match status" value="1"/>
</dbReference>
<dbReference type="SUPFAM" id="SSF54843">
    <property type="entry name" value="Ribosomal protein L22"/>
    <property type="match status" value="1"/>
</dbReference>
<dbReference type="PROSITE" id="PS00464">
    <property type="entry name" value="RIBOSOMAL_L22"/>
    <property type="match status" value="1"/>
</dbReference>
<name>RL22_SALTO</name>
<proteinExistence type="inferred from homology"/>
<gene>
    <name evidence="1" type="primary">rplV</name>
    <name type="ordered locus">Strop_3918</name>
</gene>
<evidence type="ECO:0000255" key="1">
    <source>
        <dbReference type="HAMAP-Rule" id="MF_01331"/>
    </source>
</evidence>
<evidence type="ECO:0000256" key="2">
    <source>
        <dbReference type="SAM" id="MobiDB-lite"/>
    </source>
</evidence>
<evidence type="ECO:0000305" key="3"/>
<comment type="function">
    <text evidence="1">This protein binds specifically to 23S rRNA; its binding is stimulated by other ribosomal proteins, e.g. L4, L17, and L20. It is important during the early stages of 50S assembly. It makes multiple contacts with different domains of the 23S rRNA in the assembled 50S subunit and ribosome (By similarity).</text>
</comment>
<comment type="function">
    <text evidence="1">The globular domain of the protein is located near the polypeptide exit tunnel on the outside of the subunit, while an extended beta-hairpin is found that lines the wall of the exit tunnel in the center of the 70S ribosome.</text>
</comment>
<comment type="subunit">
    <text evidence="1">Part of the 50S ribosomal subunit.</text>
</comment>
<comment type="similarity">
    <text evidence="1">Belongs to the universal ribosomal protein uL22 family.</text>
</comment>
<accession>A4XBP1</accession>
<reference key="1">
    <citation type="journal article" date="2007" name="Proc. Natl. Acad. Sci. U.S.A.">
        <title>Genome sequencing reveals complex secondary metabolome in the marine actinomycete Salinispora tropica.</title>
        <authorList>
            <person name="Udwary D.W."/>
            <person name="Zeigler L."/>
            <person name="Asolkar R.N."/>
            <person name="Singan V."/>
            <person name="Lapidus A."/>
            <person name="Fenical W."/>
            <person name="Jensen P.R."/>
            <person name="Moore B.S."/>
        </authorList>
    </citation>
    <scope>NUCLEOTIDE SEQUENCE [LARGE SCALE GENOMIC DNA]</scope>
    <source>
        <strain>ATCC BAA-916 / DSM 44818 / JCM 13857 / NBRC 105044 / CNB-440</strain>
    </source>
</reference>
<protein>
    <recommendedName>
        <fullName evidence="1">Large ribosomal subunit protein uL22</fullName>
    </recommendedName>
    <alternativeName>
        <fullName evidence="3">50S ribosomal protein L22</fullName>
    </alternativeName>
</protein>
<sequence length="152" mass="16213">MPGKGDAPVLPGARAVARYVRISPMKARRVVNLVRGLPAKEALTVLQFAPQAASEQVYKVLASAIANAENNERLDPDALLVSEAYVDEGPTMKRFQPRAQGRAYRIRKRTCHITVVVEAVAPAAPKKAAAKKAAPAKETTPAATESKTEGAE</sequence>